<sequence>MKSGIYQIKNTLNNKVYVGSAKDFEKRWKRHFKDLEKGCHSSIKLQRSFNKHGNVFECSILEEIPYEKDLIIERENFWIKELNSKINGYNIADATFGDTCSTHPLKEEIIKKRSETVKAKMLKLGPDGRKALYSKPGSKNGRWNPETHKFCKCGVRIQTSAYTCSKCRNRSGENNSFFNHKHSDITKSKISEKMKGKKPSNIKKISCDGVIFDCAADAARHFKISSGLVTYRVKSDKWNWFYINA</sequence>
<proteinExistence type="evidence at protein level"/>
<organism>
    <name type="scientific">Enterobacteria phage T4</name>
    <name type="common">Bacteriophage T4</name>
    <dbReference type="NCBI Taxonomy" id="10665"/>
    <lineage>
        <taxon>Viruses</taxon>
        <taxon>Duplodnaviria</taxon>
        <taxon>Heunggongvirae</taxon>
        <taxon>Uroviricota</taxon>
        <taxon>Caudoviricetes</taxon>
        <taxon>Straboviridae</taxon>
        <taxon>Tevenvirinae</taxon>
        <taxon>Tequatrovirus</taxon>
    </lineage>
</organism>
<gene>
    <name type="primary">ITEVIR</name>
</gene>
<name>TEV1_BPT4</name>
<protein>
    <recommendedName>
        <fullName>Intron-associated endonuclease 1</fullName>
        <ecNumber>3.1.-.-</ecNumber>
    </recommendedName>
    <alternativeName>
        <fullName>I-TevI</fullName>
    </alternativeName>
    <alternativeName>
        <fullName>IRF protein</fullName>
    </alternativeName>
</protein>
<comment type="function">
    <text>This endonuclease is specific to the thymidylate synthase (td) gene splice junction and is involved in intron homing.</text>
</comment>
<comment type="cofactor">
    <cofactor>
        <name>Mg(2+)</name>
        <dbReference type="ChEBI" id="CHEBI:18420"/>
    </cofactor>
</comment>
<comment type="similarity">
    <text evidence="2">To endonucleases of group I introns of fungi and phage.</text>
</comment>
<evidence type="ECO:0000255" key="1">
    <source>
        <dbReference type="PROSITE-ProRule" id="PRU00977"/>
    </source>
</evidence>
<evidence type="ECO:0000305" key="2"/>
<evidence type="ECO:0007829" key="3">
    <source>
        <dbReference type="PDB" id="1I3J"/>
    </source>
</evidence>
<evidence type="ECO:0007829" key="4">
    <source>
        <dbReference type="PDB" id="1MK0"/>
    </source>
</evidence>
<evidence type="ECO:0007829" key="5">
    <source>
        <dbReference type="PDB" id="1T2T"/>
    </source>
</evidence>
<keyword id="KW-0002">3D-structure</keyword>
<keyword id="KW-0255">Endonuclease</keyword>
<keyword id="KW-0378">Hydrolase</keyword>
<keyword id="KW-0404">Intron homing</keyword>
<keyword id="KW-0460">Magnesium</keyword>
<keyword id="KW-0540">Nuclease</keyword>
<keyword id="KW-1185">Reference proteome</keyword>
<accession>P13299</accession>
<accession>Q9T0T3</accession>
<reference key="1">
    <citation type="journal article" date="1986" name="Cell">
        <title>Characterization of the intron in the phage T4 thymidylate synthase gene and evidence for its self-excision from the primary transcript.</title>
        <authorList>
            <person name="Chu F.K."/>
            <person name="Maley G.F."/>
            <person name="West D.K."/>
            <person name="Belfort M."/>
            <person name="Maley F."/>
        </authorList>
    </citation>
    <scope>NUCLEOTIDE SEQUENCE [GENOMIC DNA]</scope>
    <source>
        <strain>ALC4</strain>
    </source>
</reference>
<reference key="2">
    <citation type="submission" date="1998-04" db="EMBL/GenBank/DDBJ databases">
        <authorList>
            <person name="Chu F.K."/>
        </authorList>
    </citation>
    <scope>SEQUENCE REVISION TO 67</scope>
</reference>
<reference key="3">
    <citation type="journal article" date="2003" name="Microbiol. Mol. Biol. Rev.">
        <title>Bacteriophage T4 genome.</title>
        <authorList>
            <person name="Miller E.S."/>
            <person name="Kutter E."/>
            <person name="Mosig G."/>
            <person name="Arisaka F."/>
            <person name="Kunisawa T."/>
            <person name="Ruger W."/>
        </authorList>
    </citation>
    <scope>NUCLEOTIDE SEQUENCE [LARGE SCALE GENOMIC DNA]</scope>
</reference>
<reference key="4">
    <citation type="journal article" date="1989" name="J. Biol. Chem.">
        <title>Evidence that the intron open reading frame of the phage T4 td gene encodes a specific endonuclease.</title>
        <authorList>
            <person name="West D.K."/>
            <person name="Changchien L.-M."/>
            <person name="Maley G.F."/>
            <person name="Maley F."/>
        </authorList>
    </citation>
    <scope>IDENTIFICATION OF PROTEIN</scope>
</reference>
<feature type="chain" id="PRO_0000192792" description="Intron-associated endonuclease 1">
    <location>
        <begin position="1"/>
        <end position="245"/>
    </location>
</feature>
<feature type="domain" description="GIY-YIG" evidence="1">
    <location>
        <begin position="1"/>
        <end position="88"/>
    </location>
</feature>
<feature type="strand" evidence="4">
    <location>
        <begin position="4"/>
        <end position="10"/>
    </location>
</feature>
<feature type="turn" evidence="4">
    <location>
        <begin position="11"/>
        <end position="13"/>
    </location>
</feature>
<feature type="strand" evidence="4">
    <location>
        <begin position="16"/>
        <end position="23"/>
    </location>
</feature>
<feature type="helix" evidence="4">
    <location>
        <begin position="24"/>
        <end position="37"/>
    </location>
</feature>
<feature type="helix" evidence="4">
    <location>
        <begin position="43"/>
        <end position="52"/>
    </location>
</feature>
<feature type="strand" evidence="4">
    <location>
        <begin position="56"/>
        <end position="63"/>
    </location>
</feature>
<feature type="helix" evidence="4">
    <location>
        <begin position="68"/>
        <end position="81"/>
    </location>
</feature>
<feature type="turn" evidence="4">
    <location>
        <begin position="82"/>
        <end position="86"/>
    </location>
</feature>
<feature type="strand" evidence="4">
    <location>
        <begin position="87"/>
        <end position="89"/>
    </location>
</feature>
<feature type="strand" evidence="5">
    <location>
        <begin position="154"/>
        <end position="156"/>
    </location>
</feature>
<feature type="turn" evidence="3">
    <location>
        <begin position="165"/>
        <end position="167"/>
    </location>
</feature>
<feature type="helix" evidence="3">
    <location>
        <begin position="172"/>
        <end position="174"/>
    </location>
</feature>
<feature type="turn" evidence="3">
    <location>
        <begin position="176"/>
        <end position="179"/>
    </location>
</feature>
<feature type="helix" evidence="3">
    <location>
        <begin position="184"/>
        <end position="194"/>
    </location>
</feature>
<feature type="strand" evidence="3">
    <location>
        <begin position="205"/>
        <end position="207"/>
    </location>
</feature>
<feature type="strand" evidence="3">
    <location>
        <begin position="210"/>
        <end position="214"/>
    </location>
</feature>
<feature type="helix" evidence="3">
    <location>
        <begin position="215"/>
        <end position="222"/>
    </location>
</feature>
<feature type="helix" evidence="3">
    <location>
        <begin position="226"/>
        <end position="234"/>
    </location>
</feature>
<feature type="strand" evidence="3">
    <location>
        <begin position="240"/>
        <end position="242"/>
    </location>
</feature>
<dbReference type="EC" id="3.1.-.-"/>
<dbReference type="EMBL" id="M12742">
    <property type="protein sequence ID" value="AAC12817.1"/>
    <property type="molecule type" value="Genomic_DNA"/>
</dbReference>
<dbReference type="EMBL" id="AF158101">
    <property type="protein sequence ID" value="AAD42521.3"/>
    <property type="molecule type" value="Genomic_DNA"/>
</dbReference>
<dbReference type="PIR" id="T10130">
    <property type="entry name" value="T10130"/>
</dbReference>
<dbReference type="PDB" id="1I3J">
    <property type="method" value="X-ray"/>
    <property type="resolution" value="2.20 A"/>
    <property type="chains" value="A=130-245"/>
</dbReference>
<dbReference type="PDB" id="1LN0">
    <property type="method" value="X-ray"/>
    <property type="resolution" value="2.00 A"/>
    <property type="chains" value="A/B=1-97"/>
</dbReference>
<dbReference type="PDB" id="1MK0">
    <property type="method" value="X-ray"/>
    <property type="resolution" value="1.60 A"/>
    <property type="chains" value="A=1-97"/>
</dbReference>
<dbReference type="PDB" id="1T2T">
    <property type="method" value="X-ray"/>
    <property type="resolution" value="2.50 A"/>
    <property type="chains" value="A=130-245"/>
</dbReference>
<dbReference type="PDBsum" id="1I3J"/>
<dbReference type="PDBsum" id="1LN0"/>
<dbReference type="PDBsum" id="1MK0"/>
<dbReference type="PDBsum" id="1T2T"/>
<dbReference type="SMR" id="P13299"/>
<dbReference type="DrugBank" id="DB04272">
    <property type="generic name" value="Citric acid"/>
</dbReference>
<dbReference type="MoonProt" id="P13299"/>
<dbReference type="REBASE" id="2625">
    <property type="entry name" value="I-TevI"/>
</dbReference>
<dbReference type="KEGG" id="vg:1258722"/>
<dbReference type="OrthoDB" id="6574at10239"/>
<dbReference type="EvolutionaryTrace" id="P13299"/>
<dbReference type="Proteomes" id="UP000009087">
    <property type="component" value="Segment"/>
</dbReference>
<dbReference type="GO" id="GO:0017053">
    <property type="term" value="C:transcription repressor complex"/>
    <property type="evidence" value="ECO:0000315"/>
    <property type="project" value="CAFA"/>
</dbReference>
<dbReference type="GO" id="GO:0003677">
    <property type="term" value="F:DNA binding"/>
    <property type="evidence" value="ECO:0000314"/>
    <property type="project" value="CAFA"/>
</dbReference>
<dbReference type="GO" id="GO:0001217">
    <property type="term" value="F:DNA-binding transcription repressor activity"/>
    <property type="evidence" value="ECO:0000315"/>
    <property type="project" value="CAFA"/>
</dbReference>
<dbReference type="GO" id="GO:1990238">
    <property type="term" value="F:double-stranded DNA endonuclease activity"/>
    <property type="evidence" value="ECO:0000314"/>
    <property type="project" value="CACAO"/>
</dbReference>
<dbReference type="GO" id="GO:0004519">
    <property type="term" value="F:endonuclease activity"/>
    <property type="evidence" value="ECO:0000314"/>
    <property type="project" value="CAFA"/>
</dbReference>
<dbReference type="GO" id="GO:0043565">
    <property type="term" value="F:sequence-specific DNA binding"/>
    <property type="evidence" value="ECO:0000315"/>
    <property type="project" value="CAFA"/>
</dbReference>
<dbReference type="GO" id="GO:0008270">
    <property type="term" value="F:zinc ion binding"/>
    <property type="evidence" value="ECO:0000315"/>
    <property type="project" value="CAFA"/>
</dbReference>
<dbReference type="GO" id="GO:0006314">
    <property type="term" value="P:intron homing"/>
    <property type="evidence" value="ECO:0007669"/>
    <property type="project" value="UniProtKB-KW"/>
</dbReference>
<dbReference type="GO" id="GO:0045892">
    <property type="term" value="P:negative regulation of DNA-templated transcription"/>
    <property type="evidence" value="ECO:0000315"/>
    <property type="project" value="CAFA"/>
</dbReference>
<dbReference type="GO" id="GO:0090304">
    <property type="term" value="P:nucleic acid metabolic process"/>
    <property type="evidence" value="ECO:0000314"/>
    <property type="project" value="CAFA"/>
</dbReference>
<dbReference type="CDD" id="cd00283">
    <property type="entry name" value="GIY-YIG_Cterm"/>
    <property type="match status" value="1"/>
</dbReference>
<dbReference type="CDD" id="cd10437">
    <property type="entry name" value="GIY-YIG_HE_I-TevI_like"/>
    <property type="match status" value="1"/>
</dbReference>
<dbReference type="FunFam" id="3.40.1440.10:FF:000007">
    <property type="entry name" value="I-TevI homing endonuclease"/>
    <property type="match status" value="1"/>
</dbReference>
<dbReference type="Gene3D" id="3.40.1440.10">
    <property type="entry name" value="GIY-YIG endonuclease"/>
    <property type="match status" value="1"/>
</dbReference>
<dbReference type="InterPro" id="IPR000305">
    <property type="entry name" value="GIY-YIG_endonuc"/>
</dbReference>
<dbReference type="InterPro" id="IPR035901">
    <property type="entry name" value="GIY-YIG_endonuc_sf"/>
</dbReference>
<dbReference type="InterPro" id="IPR048681">
    <property type="entry name" value="I-TevI_DNA-bd"/>
</dbReference>
<dbReference type="InterPro" id="IPR006350">
    <property type="entry name" value="Intron_endoG1"/>
</dbReference>
<dbReference type="InterPro" id="IPR003611">
    <property type="entry name" value="NUMOD3"/>
</dbReference>
<dbReference type="NCBIfam" id="TIGR01453">
    <property type="entry name" value="grpIintron_endo"/>
    <property type="match status" value="1"/>
</dbReference>
<dbReference type="Pfam" id="PF01541">
    <property type="entry name" value="GIY-YIG"/>
    <property type="match status" value="1"/>
</dbReference>
<dbReference type="Pfam" id="PF20987">
    <property type="entry name" value="I-TevI_DNA-bd"/>
    <property type="match status" value="1"/>
</dbReference>
<dbReference type="Pfam" id="PF22635">
    <property type="entry name" value="I-TevI_ZnF"/>
    <property type="match status" value="1"/>
</dbReference>
<dbReference type="SMART" id="SM00465">
    <property type="entry name" value="GIYc"/>
    <property type="match status" value="1"/>
</dbReference>
<dbReference type="SMART" id="SM00496">
    <property type="entry name" value="IENR2"/>
    <property type="match status" value="2"/>
</dbReference>
<dbReference type="SUPFAM" id="SSF64496">
    <property type="entry name" value="DNA-binding domain of intron-encoded endonucleases"/>
    <property type="match status" value="1"/>
</dbReference>
<dbReference type="SUPFAM" id="SSF82771">
    <property type="entry name" value="GIY-YIG endonuclease"/>
    <property type="match status" value="1"/>
</dbReference>
<dbReference type="PROSITE" id="PS50164">
    <property type="entry name" value="GIY_YIG"/>
    <property type="match status" value="1"/>
</dbReference>
<organismHost>
    <name type="scientific">Escherichia coli</name>
    <dbReference type="NCBI Taxonomy" id="562"/>
</organismHost>